<sequence>MRMNKFYMPTLREDPQDAEIASHKLLLRAGMIRKTAAGLYSYLPLGYRIVRKVENIVREEMDNYGSQEIHMPITQPREIWEESGRWKTFGPEMFKLKDRNNREFCLGPTAEEYFTDLVKGEIKSYKQLPLNIYQIQTKYRDEKRPRFGINRSREFLMQDAYTFDVNEEAMGEAYMNMWRAYEVVFNRLGLEYKIVAGDSGAMGGNSSHEFIALSDVGEGVICYSDDSDFAATDEKAYVYYQVNDENVEKLSSEKVLTPNCKTIEEVSDFLNVDAAHCLKAVDLMVEGKPVIVFIPGDRELNMSKLVSYLKCPEHEIEMMEEQDILALNSSPGFTGPIGLDCRIIIDSRVKQMKNFVVGANEENYHIKNVNYGDDFEGEIVEDLLMVQEGDIDPETKSPLKFKRGIEVGNIFQLGQKYSKSMNATFLDENGKEQFFWMGSYGIGVTRSVSAIVEQNHDDKGMIWPLVVAPYHVIITIVNTKDEEQNTLAEKLYEKLLLQGVEVLLDDRKERVGVKFNDRDLIGIPLRITVGKKAAEDIVEFSERRTLENVEMSSTEAYEKVMEIINSNLKSVGGLYR</sequence>
<keyword id="KW-0030">Aminoacyl-tRNA synthetase</keyword>
<keyword id="KW-0067">ATP-binding</keyword>
<keyword id="KW-0963">Cytoplasm</keyword>
<keyword id="KW-0436">Ligase</keyword>
<keyword id="KW-0547">Nucleotide-binding</keyword>
<keyword id="KW-0648">Protein biosynthesis</keyword>
<keyword id="KW-1185">Reference proteome</keyword>
<dbReference type="EC" id="6.1.1.15" evidence="1"/>
<dbReference type="EMBL" id="AP008971">
    <property type="protein sequence ID" value="BAG07563.1"/>
    <property type="molecule type" value="Genomic_DNA"/>
</dbReference>
<dbReference type="RefSeq" id="WP_002841123.1">
    <property type="nucleotide sequence ID" value="NC_010376.1"/>
</dbReference>
<dbReference type="SMR" id="B0RZJ0"/>
<dbReference type="STRING" id="334413.FMG_0145"/>
<dbReference type="KEGG" id="fma:FMG_0145"/>
<dbReference type="eggNOG" id="COG0442">
    <property type="taxonomic scope" value="Bacteria"/>
</dbReference>
<dbReference type="HOGENOM" id="CLU_016739_0_0_9"/>
<dbReference type="Proteomes" id="UP000001319">
    <property type="component" value="Chromosome"/>
</dbReference>
<dbReference type="GO" id="GO:0005829">
    <property type="term" value="C:cytosol"/>
    <property type="evidence" value="ECO:0007669"/>
    <property type="project" value="TreeGrafter"/>
</dbReference>
<dbReference type="GO" id="GO:0002161">
    <property type="term" value="F:aminoacyl-tRNA deacylase activity"/>
    <property type="evidence" value="ECO:0007669"/>
    <property type="project" value="InterPro"/>
</dbReference>
<dbReference type="GO" id="GO:0005524">
    <property type="term" value="F:ATP binding"/>
    <property type="evidence" value="ECO:0007669"/>
    <property type="project" value="UniProtKB-UniRule"/>
</dbReference>
<dbReference type="GO" id="GO:0140096">
    <property type="term" value="F:catalytic activity, acting on a protein"/>
    <property type="evidence" value="ECO:0007669"/>
    <property type="project" value="UniProtKB-ARBA"/>
</dbReference>
<dbReference type="GO" id="GO:0004827">
    <property type="term" value="F:proline-tRNA ligase activity"/>
    <property type="evidence" value="ECO:0007669"/>
    <property type="project" value="UniProtKB-UniRule"/>
</dbReference>
<dbReference type="GO" id="GO:0016740">
    <property type="term" value="F:transferase activity"/>
    <property type="evidence" value="ECO:0007669"/>
    <property type="project" value="UniProtKB-ARBA"/>
</dbReference>
<dbReference type="GO" id="GO:0006433">
    <property type="term" value="P:prolyl-tRNA aminoacylation"/>
    <property type="evidence" value="ECO:0007669"/>
    <property type="project" value="UniProtKB-UniRule"/>
</dbReference>
<dbReference type="CDD" id="cd04334">
    <property type="entry name" value="ProRS-INS"/>
    <property type="match status" value="1"/>
</dbReference>
<dbReference type="CDD" id="cd00861">
    <property type="entry name" value="ProRS_anticodon_short"/>
    <property type="match status" value="1"/>
</dbReference>
<dbReference type="CDD" id="cd00779">
    <property type="entry name" value="ProRS_core_prok"/>
    <property type="match status" value="1"/>
</dbReference>
<dbReference type="FunFam" id="3.30.930.10:FF:000065">
    <property type="entry name" value="Proline--tRNA ligase"/>
    <property type="match status" value="1"/>
</dbReference>
<dbReference type="FunFam" id="3.40.50.800:FF:000011">
    <property type="entry name" value="Proline--tRNA ligase"/>
    <property type="match status" value="1"/>
</dbReference>
<dbReference type="Gene3D" id="3.40.50.800">
    <property type="entry name" value="Anticodon-binding domain"/>
    <property type="match status" value="1"/>
</dbReference>
<dbReference type="Gene3D" id="3.30.930.10">
    <property type="entry name" value="Bira Bifunctional Protein, Domain 2"/>
    <property type="match status" value="2"/>
</dbReference>
<dbReference type="HAMAP" id="MF_01569">
    <property type="entry name" value="Pro_tRNA_synth_type1"/>
    <property type="match status" value="1"/>
</dbReference>
<dbReference type="InterPro" id="IPR002314">
    <property type="entry name" value="aa-tRNA-synt_IIb"/>
</dbReference>
<dbReference type="InterPro" id="IPR006195">
    <property type="entry name" value="aa-tRNA-synth_II"/>
</dbReference>
<dbReference type="InterPro" id="IPR045864">
    <property type="entry name" value="aa-tRNA-synth_II/BPL/LPL"/>
</dbReference>
<dbReference type="InterPro" id="IPR004154">
    <property type="entry name" value="Anticodon-bd"/>
</dbReference>
<dbReference type="InterPro" id="IPR036621">
    <property type="entry name" value="Anticodon-bd_dom_sf"/>
</dbReference>
<dbReference type="InterPro" id="IPR002316">
    <property type="entry name" value="Pro-tRNA-ligase_IIa"/>
</dbReference>
<dbReference type="InterPro" id="IPR004500">
    <property type="entry name" value="Pro-tRNA-synth_IIa_bac-type"/>
</dbReference>
<dbReference type="InterPro" id="IPR023717">
    <property type="entry name" value="Pro-tRNA-Synthase_IIa_type1"/>
</dbReference>
<dbReference type="InterPro" id="IPR050062">
    <property type="entry name" value="Pro-tRNA_synthetase"/>
</dbReference>
<dbReference type="InterPro" id="IPR044140">
    <property type="entry name" value="ProRS_anticodon_short"/>
</dbReference>
<dbReference type="InterPro" id="IPR033730">
    <property type="entry name" value="ProRS_core_prok"/>
</dbReference>
<dbReference type="InterPro" id="IPR036754">
    <property type="entry name" value="YbaK/aa-tRNA-synt-asso_dom_sf"/>
</dbReference>
<dbReference type="InterPro" id="IPR007214">
    <property type="entry name" value="YbaK/aa-tRNA-synth-assoc-dom"/>
</dbReference>
<dbReference type="NCBIfam" id="NF006625">
    <property type="entry name" value="PRK09194.1"/>
    <property type="match status" value="1"/>
</dbReference>
<dbReference type="NCBIfam" id="TIGR00409">
    <property type="entry name" value="proS_fam_II"/>
    <property type="match status" value="1"/>
</dbReference>
<dbReference type="PANTHER" id="PTHR42753">
    <property type="entry name" value="MITOCHONDRIAL RIBOSOME PROTEIN L39/PROLYL-TRNA LIGASE FAMILY MEMBER"/>
    <property type="match status" value="1"/>
</dbReference>
<dbReference type="PANTHER" id="PTHR42753:SF2">
    <property type="entry name" value="PROLINE--TRNA LIGASE"/>
    <property type="match status" value="1"/>
</dbReference>
<dbReference type="Pfam" id="PF03129">
    <property type="entry name" value="HGTP_anticodon"/>
    <property type="match status" value="1"/>
</dbReference>
<dbReference type="Pfam" id="PF00587">
    <property type="entry name" value="tRNA-synt_2b"/>
    <property type="match status" value="1"/>
</dbReference>
<dbReference type="Pfam" id="PF04073">
    <property type="entry name" value="tRNA_edit"/>
    <property type="match status" value="1"/>
</dbReference>
<dbReference type="PRINTS" id="PR01046">
    <property type="entry name" value="TRNASYNTHPRO"/>
</dbReference>
<dbReference type="SUPFAM" id="SSF52954">
    <property type="entry name" value="Class II aaRS ABD-related"/>
    <property type="match status" value="1"/>
</dbReference>
<dbReference type="SUPFAM" id="SSF55681">
    <property type="entry name" value="Class II aaRS and biotin synthetases"/>
    <property type="match status" value="1"/>
</dbReference>
<dbReference type="SUPFAM" id="SSF55826">
    <property type="entry name" value="YbaK/ProRS associated domain"/>
    <property type="match status" value="1"/>
</dbReference>
<dbReference type="PROSITE" id="PS50862">
    <property type="entry name" value="AA_TRNA_LIGASE_II"/>
    <property type="match status" value="1"/>
</dbReference>
<feature type="chain" id="PRO_1000199387" description="Proline--tRNA ligase">
    <location>
        <begin position="1"/>
        <end position="576"/>
    </location>
</feature>
<comment type="function">
    <text evidence="1">Catalyzes the attachment of proline to tRNA(Pro) in a two-step reaction: proline is first activated by ATP to form Pro-AMP and then transferred to the acceptor end of tRNA(Pro). As ProRS can inadvertently accommodate and process non-cognate amino acids such as alanine and cysteine, to avoid such errors it has two additional distinct editing activities against alanine. One activity is designated as 'pretransfer' editing and involves the tRNA(Pro)-independent hydrolysis of activated Ala-AMP. The other activity is designated 'posttransfer' editing and involves deacylation of mischarged Ala-tRNA(Pro). The misacylated Cys-tRNA(Pro) is not edited by ProRS.</text>
</comment>
<comment type="catalytic activity">
    <reaction evidence="1">
        <text>tRNA(Pro) + L-proline + ATP = L-prolyl-tRNA(Pro) + AMP + diphosphate</text>
        <dbReference type="Rhea" id="RHEA:14305"/>
        <dbReference type="Rhea" id="RHEA-COMP:9700"/>
        <dbReference type="Rhea" id="RHEA-COMP:9702"/>
        <dbReference type="ChEBI" id="CHEBI:30616"/>
        <dbReference type="ChEBI" id="CHEBI:33019"/>
        <dbReference type="ChEBI" id="CHEBI:60039"/>
        <dbReference type="ChEBI" id="CHEBI:78442"/>
        <dbReference type="ChEBI" id="CHEBI:78532"/>
        <dbReference type="ChEBI" id="CHEBI:456215"/>
        <dbReference type="EC" id="6.1.1.15"/>
    </reaction>
</comment>
<comment type="subunit">
    <text evidence="1">Homodimer.</text>
</comment>
<comment type="subcellular location">
    <subcellularLocation>
        <location evidence="1">Cytoplasm</location>
    </subcellularLocation>
</comment>
<comment type="domain">
    <text evidence="1">Consists of three domains: the N-terminal catalytic domain, the editing domain and the C-terminal anticodon-binding domain.</text>
</comment>
<comment type="similarity">
    <text evidence="1">Belongs to the class-II aminoacyl-tRNA synthetase family. ProS type 1 subfamily.</text>
</comment>
<accession>B0RZJ0</accession>
<reference key="1">
    <citation type="journal article" date="2008" name="DNA Res.">
        <title>Complete genome sequence of Finegoldia magna, an anaerobic opportunistic pathogen.</title>
        <authorList>
            <person name="Goto T."/>
            <person name="Yamashita A."/>
            <person name="Hirakawa H."/>
            <person name="Matsutani M."/>
            <person name="Todo K."/>
            <person name="Ohshima K."/>
            <person name="Toh H."/>
            <person name="Miyamoto K."/>
            <person name="Kuhara S."/>
            <person name="Hattori M."/>
            <person name="Shimizu T."/>
            <person name="Akimoto S."/>
        </authorList>
    </citation>
    <scope>NUCLEOTIDE SEQUENCE [LARGE SCALE GENOMIC DNA]</scope>
    <source>
        <strain>ATCC 29328 / DSM 20472 / WAL 2508</strain>
    </source>
</reference>
<evidence type="ECO:0000255" key="1">
    <source>
        <dbReference type="HAMAP-Rule" id="MF_01569"/>
    </source>
</evidence>
<name>SYP_FINM2</name>
<organism>
    <name type="scientific">Finegoldia magna (strain ATCC 29328 / DSM 20472 / WAL 2508)</name>
    <name type="common">Peptostreptococcus magnus</name>
    <dbReference type="NCBI Taxonomy" id="334413"/>
    <lineage>
        <taxon>Bacteria</taxon>
        <taxon>Bacillati</taxon>
        <taxon>Bacillota</taxon>
        <taxon>Tissierellia</taxon>
        <taxon>Tissierellales</taxon>
        <taxon>Peptoniphilaceae</taxon>
        <taxon>Finegoldia</taxon>
    </lineage>
</organism>
<gene>
    <name evidence="1" type="primary">proS</name>
    <name type="ordered locus">FMG_0145</name>
</gene>
<proteinExistence type="inferred from homology"/>
<protein>
    <recommendedName>
        <fullName evidence="1">Proline--tRNA ligase</fullName>
        <ecNumber evidence="1">6.1.1.15</ecNumber>
    </recommendedName>
    <alternativeName>
        <fullName evidence="1">Prolyl-tRNA synthetase</fullName>
        <shortName evidence="1">ProRS</shortName>
    </alternativeName>
</protein>